<keyword id="KW-0004">4Fe-4S</keyword>
<keyword id="KW-0408">Iron</keyword>
<keyword id="KW-0411">Iron-sulfur</keyword>
<keyword id="KW-0479">Metal-binding</keyword>
<keyword id="KW-0489">Methyltransferase</keyword>
<keyword id="KW-1185">Reference proteome</keyword>
<keyword id="KW-0949">S-adenosyl-L-methionine</keyword>
<keyword id="KW-0808">Transferase</keyword>
<name>Y965_PROMA</name>
<accession>Q7VBX7</accession>
<gene>
    <name type="ordered locus">Pro_0965</name>
</gene>
<reference key="1">
    <citation type="journal article" date="2003" name="Proc. Natl. Acad. Sci. U.S.A.">
        <title>Genome sequence of the cyanobacterium Prochlorococcus marinus SS120, a nearly minimal oxyphototrophic genome.</title>
        <authorList>
            <person name="Dufresne A."/>
            <person name="Salanoubat M."/>
            <person name="Partensky F."/>
            <person name="Artiguenave F."/>
            <person name="Axmann I.M."/>
            <person name="Barbe V."/>
            <person name="Duprat S."/>
            <person name="Galperin M.Y."/>
            <person name="Koonin E.V."/>
            <person name="Le Gall F."/>
            <person name="Makarova K.S."/>
            <person name="Ostrowski M."/>
            <person name="Oztas S."/>
            <person name="Robert C."/>
            <person name="Rogozin I.B."/>
            <person name="Scanlan D.J."/>
            <person name="Tandeau de Marsac N."/>
            <person name="Weissenbach J."/>
            <person name="Wincker P."/>
            <person name="Wolf Y.I."/>
            <person name="Hess W.R."/>
        </authorList>
    </citation>
    <scope>NUCLEOTIDE SEQUENCE [LARGE SCALE GENOMIC DNA]</scope>
    <source>
        <strain>SARG / CCMP1375 / SS120</strain>
    </source>
</reference>
<feature type="chain" id="PRO_0000162010" description="Uncharacterized RNA methyltransferase Pro_0965">
    <location>
        <begin position="1"/>
        <end position="419"/>
    </location>
</feature>
<feature type="active site" description="Nucleophile" evidence="2">
    <location>
        <position position="373"/>
    </location>
</feature>
<feature type="binding site" evidence="1">
    <location>
        <position position="38"/>
    </location>
    <ligand>
        <name>[4Fe-4S] cluster</name>
        <dbReference type="ChEBI" id="CHEBI:49883"/>
    </ligand>
</feature>
<feature type="binding site" evidence="1">
    <location>
        <position position="44"/>
    </location>
    <ligand>
        <name>[4Fe-4S] cluster</name>
        <dbReference type="ChEBI" id="CHEBI:49883"/>
    </ligand>
</feature>
<feature type="binding site" evidence="1">
    <location>
        <position position="47"/>
    </location>
    <ligand>
        <name>[4Fe-4S] cluster</name>
        <dbReference type="ChEBI" id="CHEBI:49883"/>
    </ligand>
</feature>
<feature type="binding site" evidence="1">
    <location>
        <position position="126"/>
    </location>
    <ligand>
        <name>[4Fe-4S] cluster</name>
        <dbReference type="ChEBI" id="CHEBI:49883"/>
    </ligand>
</feature>
<feature type="binding site" evidence="2">
    <location>
        <position position="250"/>
    </location>
    <ligand>
        <name>S-adenosyl-L-methionine</name>
        <dbReference type="ChEBI" id="CHEBI:59789"/>
    </ligand>
</feature>
<feature type="binding site" evidence="2">
    <location>
        <position position="280"/>
    </location>
    <ligand>
        <name>S-adenosyl-L-methionine</name>
        <dbReference type="ChEBI" id="CHEBI:59789"/>
    </ligand>
</feature>
<feature type="binding site" evidence="2">
    <location>
        <position position="301"/>
    </location>
    <ligand>
        <name>S-adenosyl-L-methionine</name>
        <dbReference type="ChEBI" id="CHEBI:59789"/>
    </ligand>
</feature>
<feature type="binding site" evidence="2">
    <location>
        <position position="346"/>
    </location>
    <ligand>
        <name>S-adenosyl-L-methionine</name>
        <dbReference type="ChEBI" id="CHEBI:59789"/>
    </ligand>
</feature>
<evidence type="ECO:0000250" key="1"/>
<evidence type="ECO:0000255" key="2">
    <source>
        <dbReference type="PROSITE-ProRule" id="PRU01024"/>
    </source>
</evidence>
<protein>
    <recommendedName>
        <fullName>Uncharacterized RNA methyltransferase Pro_0965</fullName>
        <ecNumber>2.1.1.-</ecNumber>
    </recommendedName>
</protein>
<sequence>MLPGEEALVKCEYMKKNFCLASLIKIIKKSPLRVNPKCSFYSDCGGCSMQEIEPHYQFAIKKKLLINALSRIGKLNDFPEPISITPSQFFHYRNKSTFPVYNESYGNTIIGYYQRNSHKIVDIDNCPVLDHKINKALSDIRLILKDNHINADHDIRRKGGLRHISIRSGINTNEVLITFVSNFSIKKLLFPITNKLNGSESNVVGILNNIQPKPNNKIFGATTEILTGRDYIYDKFCHMDILIGSTSFFQVNLVEAEKAINCIRNIISNTNKIVRIIDAYSGIGTMSIPLASDGYRVIGIEINNEAHEIAIRNAEINNIKTITFENQDVTKYLPKILLPNDFLILDPPRKGLDPSLIDVITKLMPIHICYLSCNPATLARDLSLILREHKYSIISITAFDFFPQTTHLETLVYLKRLTS</sequence>
<proteinExistence type="inferred from homology"/>
<dbReference type="EC" id="2.1.1.-"/>
<dbReference type="EMBL" id="AE017126">
    <property type="protein sequence ID" value="AAQ00010.1"/>
    <property type="molecule type" value="Genomic_DNA"/>
</dbReference>
<dbReference type="RefSeq" id="NP_875357.1">
    <property type="nucleotide sequence ID" value="NC_005042.1"/>
</dbReference>
<dbReference type="SMR" id="Q7VBX7"/>
<dbReference type="STRING" id="167539.Pro_0965"/>
<dbReference type="EnsemblBacteria" id="AAQ00010">
    <property type="protein sequence ID" value="AAQ00010"/>
    <property type="gene ID" value="Pro_0965"/>
</dbReference>
<dbReference type="KEGG" id="pma:Pro_0965"/>
<dbReference type="PATRIC" id="fig|167539.5.peg.1013"/>
<dbReference type="eggNOG" id="COG2265">
    <property type="taxonomic scope" value="Bacteria"/>
</dbReference>
<dbReference type="HOGENOM" id="CLU_014689_7_1_3"/>
<dbReference type="OrthoDB" id="9804590at2"/>
<dbReference type="Proteomes" id="UP000001420">
    <property type="component" value="Chromosome"/>
</dbReference>
<dbReference type="GO" id="GO:0051539">
    <property type="term" value="F:4 iron, 4 sulfur cluster binding"/>
    <property type="evidence" value="ECO:0007669"/>
    <property type="project" value="UniProtKB-KW"/>
</dbReference>
<dbReference type="GO" id="GO:0046872">
    <property type="term" value="F:metal ion binding"/>
    <property type="evidence" value="ECO:0007669"/>
    <property type="project" value="UniProtKB-KW"/>
</dbReference>
<dbReference type="GO" id="GO:0070041">
    <property type="term" value="F:rRNA (uridine-C5-)-methyltransferase activity"/>
    <property type="evidence" value="ECO:0007669"/>
    <property type="project" value="TreeGrafter"/>
</dbReference>
<dbReference type="GO" id="GO:0070475">
    <property type="term" value="P:rRNA base methylation"/>
    <property type="evidence" value="ECO:0007669"/>
    <property type="project" value="TreeGrafter"/>
</dbReference>
<dbReference type="CDD" id="cd02440">
    <property type="entry name" value="AdoMet_MTases"/>
    <property type="match status" value="1"/>
</dbReference>
<dbReference type="Gene3D" id="2.40.50.1070">
    <property type="match status" value="1"/>
</dbReference>
<dbReference type="Gene3D" id="2.40.50.140">
    <property type="entry name" value="Nucleic acid-binding proteins"/>
    <property type="match status" value="1"/>
</dbReference>
<dbReference type="Gene3D" id="3.40.50.150">
    <property type="entry name" value="Vaccinia Virus protein VP39"/>
    <property type="match status" value="1"/>
</dbReference>
<dbReference type="InterPro" id="IPR030390">
    <property type="entry name" value="MeTrfase_TrmA_AS"/>
</dbReference>
<dbReference type="InterPro" id="IPR030391">
    <property type="entry name" value="MeTrfase_TrmA_CS"/>
</dbReference>
<dbReference type="InterPro" id="IPR012340">
    <property type="entry name" value="NA-bd_OB-fold"/>
</dbReference>
<dbReference type="InterPro" id="IPR029063">
    <property type="entry name" value="SAM-dependent_MTases_sf"/>
</dbReference>
<dbReference type="InterPro" id="IPR010280">
    <property type="entry name" value="U5_MeTrfase_fam"/>
</dbReference>
<dbReference type="NCBIfam" id="TIGR00479">
    <property type="entry name" value="rumA"/>
    <property type="match status" value="1"/>
</dbReference>
<dbReference type="PANTHER" id="PTHR11061">
    <property type="entry name" value="RNA M5U METHYLTRANSFERASE"/>
    <property type="match status" value="1"/>
</dbReference>
<dbReference type="PANTHER" id="PTHR11061:SF30">
    <property type="entry name" value="TRNA (URACIL(54)-C(5))-METHYLTRANSFERASE"/>
    <property type="match status" value="1"/>
</dbReference>
<dbReference type="Pfam" id="PF05958">
    <property type="entry name" value="tRNA_U5-meth_tr"/>
    <property type="match status" value="1"/>
</dbReference>
<dbReference type="SUPFAM" id="SSF53335">
    <property type="entry name" value="S-adenosyl-L-methionine-dependent methyltransferases"/>
    <property type="match status" value="1"/>
</dbReference>
<dbReference type="PROSITE" id="PS51687">
    <property type="entry name" value="SAM_MT_RNA_M5U"/>
    <property type="match status" value="1"/>
</dbReference>
<dbReference type="PROSITE" id="PS01230">
    <property type="entry name" value="TRMA_1"/>
    <property type="match status" value="1"/>
</dbReference>
<dbReference type="PROSITE" id="PS01231">
    <property type="entry name" value="TRMA_2"/>
    <property type="match status" value="1"/>
</dbReference>
<comment type="similarity">
    <text evidence="2">Belongs to the class I-like SAM-binding methyltransferase superfamily. RNA M5U methyltransferase family.</text>
</comment>
<organism>
    <name type="scientific">Prochlorococcus marinus (strain SARG / CCMP1375 / SS120)</name>
    <dbReference type="NCBI Taxonomy" id="167539"/>
    <lineage>
        <taxon>Bacteria</taxon>
        <taxon>Bacillati</taxon>
        <taxon>Cyanobacteriota</taxon>
        <taxon>Cyanophyceae</taxon>
        <taxon>Synechococcales</taxon>
        <taxon>Prochlorococcaceae</taxon>
        <taxon>Prochlorococcus</taxon>
    </lineage>
</organism>